<organism>
    <name type="scientific">Methanococcus maripaludis (strain C5 / ATCC BAA-1333)</name>
    <dbReference type="NCBI Taxonomy" id="402880"/>
    <lineage>
        <taxon>Archaea</taxon>
        <taxon>Methanobacteriati</taxon>
        <taxon>Methanobacteriota</taxon>
        <taxon>Methanomada group</taxon>
        <taxon>Methanococci</taxon>
        <taxon>Methanococcales</taxon>
        <taxon>Methanococcaceae</taxon>
        <taxon>Methanococcus</taxon>
    </lineage>
</organism>
<sequence length="390" mass="42440">MRALNNSYDVVVVGAGPAGSMASYNASKNGAKTLLLEKSQEIGTPVRCAEAVPRLEDFGINPDPSFVRSYIKGGYLIAPNGKQVVVKGGKTDGYVVERKVFDKYLAIRSGQAGTQIAVKSRVTGIEKTDDGYNVFVNYLGDEYIVKTKIVIAADGVESNIAEYAGLKSKKSHKEICSCAEYEMTNVKLLDNEMMEFYFGDICPKGYIWLFPKGDTVNVGIGIIDSKKRAIDYLDEFLTNPLVKGRLDNAVPVEFKVGGDPVGGPIEKTVADNIMVVGDAAGHVSPLTGGGIGLSMSCGLMAGDVAAQSIKAEDHSREFLSAYEKRWKEKYYKPLMKDLKYKTILQKLSDEELNAIADSIPENLEEVDVGKLAVKIVAKAPSLLRHFKELI</sequence>
<proteinExistence type="inferred from homology"/>
<dbReference type="EC" id="1.3.-.-" evidence="1"/>
<dbReference type="EMBL" id="CP000609">
    <property type="protein sequence ID" value="ABO35548.1"/>
    <property type="molecule type" value="Genomic_DNA"/>
</dbReference>
<dbReference type="RefSeq" id="WP_011869001.1">
    <property type="nucleotide sequence ID" value="NC_009135.1"/>
</dbReference>
<dbReference type="SMR" id="A4FZB4"/>
<dbReference type="STRING" id="402880.MmarC5_1250"/>
<dbReference type="GeneID" id="4929082"/>
<dbReference type="KEGG" id="mmq:MmarC5_1250"/>
<dbReference type="eggNOG" id="arCOG00570">
    <property type="taxonomic scope" value="Archaea"/>
</dbReference>
<dbReference type="HOGENOM" id="CLU_024648_0_0_2"/>
<dbReference type="OrthoDB" id="6062at2157"/>
<dbReference type="UniPathway" id="UPA00940"/>
<dbReference type="Proteomes" id="UP000000253">
    <property type="component" value="Chromosome"/>
</dbReference>
<dbReference type="GO" id="GO:0016020">
    <property type="term" value="C:membrane"/>
    <property type="evidence" value="ECO:0007669"/>
    <property type="project" value="GOC"/>
</dbReference>
<dbReference type="GO" id="GO:0050660">
    <property type="term" value="F:flavin adenine dinucleotide binding"/>
    <property type="evidence" value="ECO:0007669"/>
    <property type="project" value="UniProtKB-UniRule"/>
</dbReference>
<dbReference type="GO" id="GO:0045550">
    <property type="term" value="F:geranylgeranyl reductase activity"/>
    <property type="evidence" value="ECO:0007669"/>
    <property type="project" value="InterPro"/>
</dbReference>
<dbReference type="GO" id="GO:0016628">
    <property type="term" value="F:oxidoreductase activity, acting on the CH-CH group of donors, NAD or NADP as acceptor"/>
    <property type="evidence" value="ECO:0007669"/>
    <property type="project" value="InterPro"/>
</dbReference>
<dbReference type="GO" id="GO:0046474">
    <property type="term" value="P:glycerophospholipid biosynthetic process"/>
    <property type="evidence" value="ECO:0007669"/>
    <property type="project" value="UniProtKB-UniRule"/>
</dbReference>
<dbReference type="GO" id="GO:0046467">
    <property type="term" value="P:membrane lipid biosynthetic process"/>
    <property type="evidence" value="ECO:0007669"/>
    <property type="project" value="InterPro"/>
</dbReference>
<dbReference type="Gene3D" id="3.30.9.10">
    <property type="entry name" value="D-Amino Acid Oxidase, subunit A, domain 2"/>
    <property type="match status" value="1"/>
</dbReference>
<dbReference type="Gene3D" id="3.50.50.60">
    <property type="entry name" value="FAD/NAD(P)-binding domain"/>
    <property type="match status" value="1"/>
</dbReference>
<dbReference type="HAMAP" id="MF_01287">
    <property type="entry name" value="DGGGPL_reductase"/>
    <property type="match status" value="1"/>
</dbReference>
<dbReference type="InterPro" id="IPR023590">
    <property type="entry name" value="DGGGPL_reductase"/>
</dbReference>
<dbReference type="InterPro" id="IPR036188">
    <property type="entry name" value="FAD/NAD-bd_sf"/>
</dbReference>
<dbReference type="InterPro" id="IPR011777">
    <property type="entry name" value="Geranylgeranyl_Rdtase_fam"/>
</dbReference>
<dbReference type="InterPro" id="IPR050407">
    <property type="entry name" value="Geranylgeranyl_reductase"/>
</dbReference>
<dbReference type="InterPro" id="IPR054715">
    <property type="entry name" value="GGR_cat"/>
</dbReference>
<dbReference type="NCBIfam" id="TIGR02032">
    <property type="entry name" value="GG-red-SF"/>
    <property type="match status" value="1"/>
</dbReference>
<dbReference type="PANTHER" id="PTHR42685:SF18">
    <property type="entry name" value="DIGERANYLGERANYLGLYCEROPHOSPHOLIPID REDUCTASE"/>
    <property type="match status" value="1"/>
</dbReference>
<dbReference type="PANTHER" id="PTHR42685">
    <property type="entry name" value="GERANYLGERANYL DIPHOSPHATE REDUCTASE"/>
    <property type="match status" value="1"/>
</dbReference>
<dbReference type="Pfam" id="PF12831">
    <property type="entry name" value="FAD_oxidored"/>
    <property type="match status" value="1"/>
</dbReference>
<dbReference type="Pfam" id="PF22578">
    <property type="entry name" value="GGR_cat"/>
    <property type="match status" value="1"/>
</dbReference>
<dbReference type="PRINTS" id="PR00420">
    <property type="entry name" value="RNGMNOXGNASE"/>
</dbReference>
<dbReference type="SUPFAM" id="SSF51905">
    <property type="entry name" value="FAD/NAD(P)-binding domain"/>
    <property type="match status" value="1"/>
</dbReference>
<evidence type="ECO:0000255" key="1">
    <source>
        <dbReference type="HAMAP-Rule" id="MF_01287"/>
    </source>
</evidence>
<gene>
    <name type="ordered locus">MmarC5_1250</name>
</gene>
<keyword id="KW-0274">FAD</keyword>
<keyword id="KW-0285">Flavoprotein</keyword>
<keyword id="KW-0444">Lipid biosynthesis</keyword>
<keyword id="KW-0443">Lipid metabolism</keyword>
<keyword id="KW-0560">Oxidoreductase</keyword>
<keyword id="KW-0594">Phospholipid biosynthesis</keyword>
<keyword id="KW-1208">Phospholipid metabolism</keyword>
<name>GGR_METM5</name>
<comment type="function">
    <text evidence="1">Is involved in the reduction of 2,3-digeranylgeranylglycerophospholipids (unsaturated archaeols) into 2,3-diphytanylglycerophospholipids (saturated archaeols) in the biosynthesis of archaeal membrane lipids. Catalyzes the formation of archaetidic acid (2,3-di-O-phytanyl-sn-glyceryl phosphate) from 2,3-di-O-geranylgeranylglyceryl phosphate (DGGGP) via the hydrogenation of each double bond of the isoprenoid chains. Is also probably able to reduce double bonds of geranyl groups in CDP-2,3-bis-O-(geranylgeranyl)-sn-glycerol and archaetidylserine, thus acting at various stages in the biosynthesis of archaeal membrane lipids.</text>
</comment>
<comment type="catalytic activity">
    <reaction evidence="1">
        <text>a 2,3-bis-O-phytanyl-sn-glycerol 1-phospholipid + 8 A = a 2,3-bis-O-(geranylgeranyl)-sn-glycerol 1-phospholipid + 8 AH2</text>
        <dbReference type="Rhea" id="RHEA:64376"/>
        <dbReference type="ChEBI" id="CHEBI:13193"/>
        <dbReference type="ChEBI" id="CHEBI:17499"/>
        <dbReference type="ChEBI" id="CHEBI:138139"/>
        <dbReference type="ChEBI" id="CHEBI:138140"/>
    </reaction>
    <physiologicalReaction direction="right-to-left" evidence="1">
        <dbReference type="Rhea" id="RHEA:64378"/>
    </physiologicalReaction>
</comment>
<comment type="catalytic activity">
    <reaction evidence="1">
        <text>2,3-bis-O-(phytanyl)-sn-glycerol 1-phosphate + 8 A = 2,3-bis-O-(geranylgeranyl)-sn-glycerol 1-phosphate + 8 AH2</text>
        <dbReference type="Rhea" id="RHEA:64368"/>
        <dbReference type="ChEBI" id="CHEBI:13193"/>
        <dbReference type="ChEBI" id="CHEBI:17499"/>
        <dbReference type="ChEBI" id="CHEBI:58837"/>
        <dbReference type="ChEBI" id="CHEBI:73125"/>
    </reaction>
    <physiologicalReaction direction="right-to-left" evidence="1">
        <dbReference type="Rhea" id="RHEA:64370"/>
    </physiologicalReaction>
</comment>
<comment type="catalytic activity">
    <reaction evidence="1">
        <text>CDP-2,3-bis-O-(geranylgeranyl)-sn-glycerol + 8 AH2 = CDP-2,3-bis-O-(phytanyl)-sn-glycerol + 8 A</text>
        <dbReference type="Rhea" id="RHEA:84207"/>
        <dbReference type="ChEBI" id="CHEBI:13193"/>
        <dbReference type="ChEBI" id="CHEBI:17499"/>
        <dbReference type="ChEBI" id="CHEBI:58838"/>
        <dbReference type="ChEBI" id="CHEBI:74004"/>
    </reaction>
    <physiologicalReaction direction="left-to-right" evidence="1">
        <dbReference type="Rhea" id="RHEA:84208"/>
    </physiologicalReaction>
</comment>
<comment type="catalytic activity">
    <reaction evidence="1">
        <text>archaetidylserine + 8 AH2 = 2,3-bis-O-phytanyl-sn-glycero-3-phospho-L-serine + 8 A</text>
        <dbReference type="Rhea" id="RHEA:84215"/>
        <dbReference type="ChEBI" id="CHEBI:13193"/>
        <dbReference type="ChEBI" id="CHEBI:17499"/>
        <dbReference type="ChEBI" id="CHEBI:71517"/>
        <dbReference type="ChEBI" id="CHEBI:74853"/>
    </reaction>
    <physiologicalReaction direction="left-to-right" evidence="1">
        <dbReference type="Rhea" id="RHEA:84216"/>
    </physiologicalReaction>
</comment>
<comment type="cofactor">
    <cofactor evidence="1">
        <name>FAD</name>
        <dbReference type="ChEBI" id="CHEBI:57692"/>
    </cofactor>
    <text evidence="1">Binds 1 FAD per subunit.</text>
</comment>
<comment type="pathway">
    <text evidence="1">Membrane lipid metabolism; glycerophospholipid metabolism.</text>
</comment>
<comment type="miscellaneous">
    <text evidence="1">Reduction reaction proceeds via syn addition of hydrogen for double bonds.</text>
</comment>
<comment type="similarity">
    <text evidence="1">Belongs to the geranylgeranyl reductase family. DGGGPL reductase subfamily.</text>
</comment>
<protein>
    <recommendedName>
        <fullName evidence="1">Digeranylgeranylglycerophospholipid reductase</fullName>
        <shortName evidence="1">DGGGPL reductase</shortName>
        <ecNumber evidence="1">1.3.-.-</ecNumber>
    </recommendedName>
    <alternativeName>
        <fullName evidence="1">2,3-bis-O-geranylgeranylglyceryl phosphate reductase</fullName>
    </alternativeName>
    <alternativeName>
        <fullName evidence="1">Geranylgeranyl reductase</fullName>
        <shortName evidence="1">GGR</shortName>
    </alternativeName>
</protein>
<feature type="chain" id="PRO_0000351461" description="Digeranylgeranylglycerophospholipid reductase">
    <location>
        <begin position="1"/>
        <end position="390"/>
    </location>
</feature>
<feature type="binding site" evidence="1">
    <location>
        <position position="18"/>
    </location>
    <ligand>
        <name>FAD</name>
        <dbReference type="ChEBI" id="CHEBI:57692"/>
    </ligand>
</feature>
<feature type="binding site" evidence="1">
    <location>
        <position position="37"/>
    </location>
    <ligand>
        <name>FAD</name>
        <dbReference type="ChEBI" id="CHEBI:57692"/>
    </ligand>
</feature>
<feature type="binding site" evidence="1">
    <location>
        <position position="48"/>
    </location>
    <ligand>
        <name>FAD</name>
        <dbReference type="ChEBI" id="CHEBI:57692"/>
    </ligand>
</feature>
<feature type="binding site" evidence="1">
    <location>
        <position position="49"/>
    </location>
    <ligand>
        <name>FAD</name>
        <dbReference type="ChEBI" id="CHEBI:57692"/>
    </ligand>
</feature>
<feature type="binding site" evidence="1">
    <location>
        <position position="51"/>
    </location>
    <ligand>
        <name>FAD</name>
        <dbReference type="ChEBI" id="CHEBI:57692"/>
    </ligand>
</feature>
<feature type="binding site" evidence="1">
    <location>
        <position position="98"/>
    </location>
    <ligand>
        <name>FAD</name>
        <dbReference type="ChEBI" id="CHEBI:57692"/>
    </ligand>
</feature>
<feature type="binding site" evidence="1">
    <location>
        <position position="122"/>
    </location>
    <ligand>
        <name>FAD</name>
        <dbReference type="ChEBI" id="CHEBI:57692"/>
    </ligand>
</feature>
<feature type="binding site" evidence="1">
    <location>
        <position position="278"/>
    </location>
    <ligand>
        <name>FAD</name>
        <dbReference type="ChEBI" id="CHEBI:57692"/>
    </ligand>
</feature>
<feature type="binding site" evidence="1">
    <location>
        <position position="290"/>
    </location>
    <ligand>
        <name>FAD</name>
        <dbReference type="ChEBI" id="CHEBI:57692"/>
    </ligand>
</feature>
<feature type="binding site" evidence="1">
    <location>
        <position position="291"/>
    </location>
    <ligand>
        <name>FAD</name>
        <dbReference type="ChEBI" id="CHEBI:57692"/>
    </ligand>
</feature>
<feature type="binding site" evidence="1">
    <location>
        <position position="368"/>
    </location>
    <ligand>
        <name>a 2,3-bis-O-(geranylgeranyl)-sn-glycerol 1-phospholipid</name>
        <dbReference type="ChEBI" id="CHEBI:138140"/>
    </ligand>
</feature>
<reference key="1">
    <citation type="submission" date="2007-03" db="EMBL/GenBank/DDBJ databases">
        <title>Complete sequence of chromosome of Methanococcus maripaludis C5.</title>
        <authorList>
            <consortium name="US DOE Joint Genome Institute"/>
            <person name="Copeland A."/>
            <person name="Lucas S."/>
            <person name="Lapidus A."/>
            <person name="Barry K."/>
            <person name="Glavina del Rio T."/>
            <person name="Dalin E."/>
            <person name="Tice H."/>
            <person name="Pitluck S."/>
            <person name="Chertkov O."/>
            <person name="Brettin T."/>
            <person name="Bruce D."/>
            <person name="Han C."/>
            <person name="Detter J.C."/>
            <person name="Schmutz J."/>
            <person name="Larimer F."/>
            <person name="Land M."/>
            <person name="Hauser L."/>
            <person name="Kyrpides N."/>
            <person name="Mikhailova N."/>
            <person name="Sieprawska-Lupa M."/>
            <person name="Whitman W.B."/>
            <person name="Richardson P."/>
        </authorList>
    </citation>
    <scope>NUCLEOTIDE SEQUENCE [LARGE SCALE GENOMIC DNA]</scope>
    <source>
        <strain>C5 / ATCC BAA-1333</strain>
    </source>
</reference>
<accession>A4FZB4</accession>